<protein>
    <recommendedName>
        <fullName>Calmodulin</fullName>
        <shortName>CaM</shortName>
    </recommendedName>
</protein>
<feature type="initiator methionine" description="Removed" evidence="1">
    <location>
        <position position="1"/>
    </location>
</feature>
<feature type="chain" id="PRO_0000198293" description="Calmodulin">
    <location>
        <begin position="2"/>
        <end position="149"/>
    </location>
</feature>
<feature type="domain" description="EF-hand 1" evidence="2">
    <location>
        <begin position="8"/>
        <end position="43"/>
    </location>
</feature>
<feature type="domain" description="EF-hand 2" evidence="2">
    <location>
        <begin position="44"/>
        <end position="79"/>
    </location>
</feature>
<feature type="domain" description="EF-hand 3" evidence="2">
    <location>
        <begin position="81"/>
        <end position="116"/>
    </location>
</feature>
<feature type="domain" description="EF-hand 4" evidence="2">
    <location>
        <begin position="117"/>
        <end position="149"/>
    </location>
</feature>
<feature type="binding site" evidence="2">
    <location>
        <position position="21"/>
    </location>
    <ligand>
        <name>Ca(2+)</name>
        <dbReference type="ChEBI" id="CHEBI:29108"/>
        <label>1</label>
    </ligand>
</feature>
<feature type="binding site" evidence="2">
    <location>
        <position position="23"/>
    </location>
    <ligand>
        <name>Ca(2+)</name>
        <dbReference type="ChEBI" id="CHEBI:29108"/>
        <label>1</label>
    </ligand>
</feature>
<feature type="binding site" evidence="2">
    <location>
        <position position="25"/>
    </location>
    <ligand>
        <name>Ca(2+)</name>
        <dbReference type="ChEBI" id="CHEBI:29108"/>
        <label>1</label>
    </ligand>
</feature>
<feature type="binding site" evidence="2">
    <location>
        <position position="27"/>
    </location>
    <ligand>
        <name>Ca(2+)</name>
        <dbReference type="ChEBI" id="CHEBI:29108"/>
        <label>1</label>
    </ligand>
</feature>
<feature type="binding site" evidence="2">
    <location>
        <position position="32"/>
    </location>
    <ligand>
        <name>Ca(2+)</name>
        <dbReference type="ChEBI" id="CHEBI:29108"/>
        <label>1</label>
    </ligand>
</feature>
<feature type="binding site" evidence="2">
    <location>
        <position position="57"/>
    </location>
    <ligand>
        <name>Ca(2+)</name>
        <dbReference type="ChEBI" id="CHEBI:29108"/>
        <label>2</label>
    </ligand>
</feature>
<feature type="binding site" evidence="2">
    <location>
        <position position="59"/>
    </location>
    <ligand>
        <name>Ca(2+)</name>
        <dbReference type="ChEBI" id="CHEBI:29108"/>
        <label>2</label>
    </ligand>
</feature>
<feature type="binding site" evidence="2">
    <location>
        <position position="61"/>
    </location>
    <ligand>
        <name>Ca(2+)</name>
        <dbReference type="ChEBI" id="CHEBI:29108"/>
        <label>2</label>
    </ligand>
</feature>
<feature type="binding site" evidence="2">
    <location>
        <position position="63"/>
    </location>
    <ligand>
        <name>Ca(2+)</name>
        <dbReference type="ChEBI" id="CHEBI:29108"/>
        <label>2</label>
    </ligand>
</feature>
<feature type="binding site" evidence="2">
    <location>
        <position position="68"/>
    </location>
    <ligand>
        <name>Ca(2+)</name>
        <dbReference type="ChEBI" id="CHEBI:29108"/>
        <label>2</label>
    </ligand>
</feature>
<feature type="binding site" evidence="2">
    <location>
        <position position="94"/>
    </location>
    <ligand>
        <name>Ca(2+)</name>
        <dbReference type="ChEBI" id="CHEBI:29108"/>
        <label>3</label>
    </ligand>
</feature>
<feature type="binding site" evidence="2">
    <location>
        <position position="96"/>
    </location>
    <ligand>
        <name>Ca(2+)</name>
        <dbReference type="ChEBI" id="CHEBI:29108"/>
        <label>3</label>
    </ligand>
</feature>
<feature type="binding site" evidence="2">
    <location>
        <position position="98"/>
    </location>
    <ligand>
        <name>Ca(2+)</name>
        <dbReference type="ChEBI" id="CHEBI:29108"/>
        <label>3</label>
    </ligand>
</feature>
<feature type="binding site" evidence="2">
    <location>
        <position position="105"/>
    </location>
    <ligand>
        <name>Ca(2+)</name>
        <dbReference type="ChEBI" id="CHEBI:29108"/>
        <label>3</label>
    </ligand>
</feature>
<feature type="binding site" evidence="2">
    <location>
        <position position="130"/>
    </location>
    <ligand>
        <name>Ca(2+)</name>
        <dbReference type="ChEBI" id="CHEBI:29108"/>
        <label>4</label>
    </ligand>
</feature>
<feature type="binding site" evidence="2">
    <location>
        <position position="132"/>
    </location>
    <ligand>
        <name>Ca(2+)</name>
        <dbReference type="ChEBI" id="CHEBI:29108"/>
        <label>4</label>
    </ligand>
</feature>
<feature type="binding site" evidence="2">
    <location>
        <position position="134"/>
    </location>
    <ligand>
        <name>Ca(2+)</name>
        <dbReference type="ChEBI" id="CHEBI:29108"/>
        <label>4</label>
    </ligand>
</feature>
<feature type="binding site" evidence="2">
    <location>
        <position position="136"/>
    </location>
    <ligand>
        <name>Ca(2+)</name>
        <dbReference type="ChEBI" id="CHEBI:29108"/>
        <label>4</label>
    </ligand>
</feature>
<feature type="binding site" evidence="2">
    <location>
        <position position="141"/>
    </location>
    <ligand>
        <name>Ca(2+)</name>
        <dbReference type="ChEBI" id="CHEBI:29108"/>
        <label>4</label>
    </ligand>
</feature>
<feature type="modified residue" description="N-acetylalanine" evidence="1">
    <location>
        <position position="2"/>
    </location>
</feature>
<feature type="modified residue" description="N6,N6,N6-trimethyllysine" evidence="1">
    <location>
        <position position="116"/>
    </location>
</feature>
<comment type="function">
    <text>Calmodulin mediates the control of a large number of enzymes, ion channels and other proteins by Ca(2+). Among the enzymes to be stimulated by the calmodulin-Ca(2+) complex are a number of protein kinases and phosphatases.</text>
</comment>
<comment type="miscellaneous">
    <text>This protein has four functional calcium-binding sites.</text>
</comment>
<comment type="similarity">
    <text evidence="3">Belongs to the calmodulin family.</text>
</comment>
<organism>
    <name type="scientific">Solanum lycopersicum</name>
    <name type="common">Tomato</name>
    <name type="synonym">Lycopersicon esculentum</name>
    <dbReference type="NCBI Taxonomy" id="4081"/>
    <lineage>
        <taxon>Eukaryota</taxon>
        <taxon>Viridiplantae</taxon>
        <taxon>Streptophyta</taxon>
        <taxon>Embryophyta</taxon>
        <taxon>Tracheophyta</taxon>
        <taxon>Spermatophyta</taxon>
        <taxon>Magnoliopsida</taxon>
        <taxon>eudicotyledons</taxon>
        <taxon>Gunneridae</taxon>
        <taxon>Pentapetalae</taxon>
        <taxon>asterids</taxon>
        <taxon>lamiids</taxon>
        <taxon>Solanales</taxon>
        <taxon>Solanaceae</taxon>
        <taxon>Solanoideae</taxon>
        <taxon>Solaneae</taxon>
        <taxon>Solanum</taxon>
        <taxon>Solanum subgen. Lycopersicon</taxon>
    </lineage>
</organism>
<dbReference type="EMBL" id="M67472">
    <property type="protein sequence ID" value="AAA34144.1"/>
    <property type="molecule type" value="mRNA"/>
</dbReference>
<dbReference type="RefSeq" id="NP_001234786.1">
    <property type="nucleotide sequence ID" value="NM_001247857.2"/>
</dbReference>
<dbReference type="SMR" id="P27161"/>
<dbReference type="STRING" id="4081.P27161"/>
<dbReference type="PaxDb" id="4081-Solyc03g098050.2.1"/>
<dbReference type="EnsemblPlants" id="Solyc03g098050.3.1">
    <property type="protein sequence ID" value="Solyc03g098050.3.1"/>
    <property type="gene ID" value="Solyc03g098050.3"/>
</dbReference>
<dbReference type="GeneID" id="543984"/>
<dbReference type="Gramene" id="Solyc03g098050.3.1">
    <property type="protein sequence ID" value="Solyc03g098050.3.1"/>
    <property type="gene ID" value="Solyc03g098050.3"/>
</dbReference>
<dbReference type="KEGG" id="sly:543984"/>
<dbReference type="eggNOG" id="KOG0027">
    <property type="taxonomic scope" value="Eukaryota"/>
</dbReference>
<dbReference type="HOGENOM" id="CLU_061288_2_0_1"/>
<dbReference type="InParanoid" id="P27161"/>
<dbReference type="OMA" id="WATHRNL"/>
<dbReference type="OrthoDB" id="26525at2759"/>
<dbReference type="PhylomeDB" id="P27161"/>
<dbReference type="Proteomes" id="UP000004994">
    <property type="component" value="Chromosome 3"/>
</dbReference>
<dbReference type="GO" id="GO:0005737">
    <property type="term" value="C:cytoplasm"/>
    <property type="evidence" value="ECO:0000318"/>
    <property type="project" value="GO_Central"/>
</dbReference>
<dbReference type="GO" id="GO:0005509">
    <property type="term" value="F:calcium ion binding"/>
    <property type="evidence" value="ECO:0000318"/>
    <property type="project" value="GO_Central"/>
</dbReference>
<dbReference type="GO" id="GO:0030234">
    <property type="term" value="F:enzyme regulator activity"/>
    <property type="evidence" value="ECO:0000318"/>
    <property type="project" value="GO_Central"/>
</dbReference>
<dbReference type="CDD" id="cd00051">
    <property type="entry name" value="EFh"/>
    <property type="match status" value="2"/>
</dbReference>
<dbReference type="FunFam" id="1.10.238.10:FF:000034">
    <property type="entry name" value="Calmodulin"/>
    <property type="match status" value="1"/>
</dbReference>
<dbReference type="FunFam" id="1.10.238.10:FF:000042">
    <property type="entry name" value="Calmodulin"/>
    <property type="match status" value="1"/>
</dbReference>
<dbReference type="Gene3D" id="1.10.238.10">
    <property type="entry name" value="EF-hand"/>
    <property type="match status" value="3"/>
</dbReference>
<dbReference type="InterPro" id="IPR050230">
    <property type="entry name" value="CALM/Myosin/TropC-like"/>
</dbReference>
<dbReference type="InterPro" id="IPR011992">
    <property type="entry name" value="EF-hand-dom_pair"/>
</dbReference>
<dbReference type="InterPro" id="IPR018247">
    <property type="entry name" value="EF_Hand_1_Ca_BS"/>
</dbReference>
<dbReference type="InterPro" id="IPR002048">
    <property type="entry name" value="EF_hand_dom"/>
</dbReference>
<dbReference type="PANTHER" id="PTHR23048:SF53">
    <property type="entry name" value="CALMODULIN"/>
    <property type="match status" value="1"/>
</dbReference>
<dbReference type="PANTHER" id="PTHR23048">
    <property type="entry name" value="MYOSIN LIGHT CHAIN 1, 3"/>
    <property type="match status" value="1"/>
</dbReference>
<dbReference type="Pfam" id="PF13499">
    <property type="entry name" value="EF-hand_7"/>
    <property type="match status" value="2"/>
</dbReference>
<dbReference type="SMART" id="SM00054">
    <property type="entry name" value="EFh"/>
    <property type="match status" value="4"/>
</dbReference>
<dbReference type="SUPFAM" id="SSF47473">
    <property type="entry name" value="EF-hand"/>
    <property type="match status" value="1"/>
</dbReference>
<dbReference type="PROSITE" id="PS00018">
    <property type="entry name" value="EF_HAND_1"/>
    <property type="match status" value="4"/>
</dbReference>
<dbReference type="PROSITE" id="PS50222">
    <property type="entry name" value="EF_HAND_2"/>
    <property type="match status" value="4"/>
</dbReference>
<evidence type="ECO:0000250" key="1"/>
<evidence type="ECO:0000255" key="2">
    <source>
        <dbReference type="PROSITE-ProRule" id="PRU00448"/>
    </source>
</evidence>
<evidence type="ECO:0000305" key="3"/>
<sequence length="149" mass="16932">MAEQLTEEQIAEFKEAFSLFDKDGDGCITTKELGTVMRSLGQNPTEAELQDMISEVDADQNGTIDFPEFLNLMARKMKDTDSEEELKEAFKVFDKDQNGFISAAELRHVMTNLGEKLTDEEVDEMIREADIDGDGQVNYEEFVRMMLAK</sequence>
<proteinExistence type="evidence at transcript level"/>
<keyword id="KW-0007">Acetylation</keyword>
<keyword id="KW-0106">Calcium</keyword>
<keyword id="KW-0479">Metal-binding</keyword>
<keyword id="KW-0488">Methylation</keyword>
<keyword id="KW-1185">Reference proteome</keyword>
<keyword id="KW-0677">Repeat</keyword>
<reference key="1">
    <citation type="submission" date="1991-06" db="EMBL/GenBank/DDBJ databases">
        <title>Nucleotide sequence of a tomato calmodulin.</title>
        <authorList>
            <person name="Colwell G."/>
            <person name="Paul E.M."/>
            <person name="Thomas S.R."/>
            <person name="Erion J.L."/>
        </authorList>
    </citation>
    <scope>NUCLEOTIDE SEQUENCE [MRNA]</scope>
</reference>
<gene>
    <name type="primary">CALM1</name>
</gene>
<accession>P27161</accession>
<name>CALM_SOLLC</name>